<dbReference type="EMBL" id="AB025632">
    <property type="protein sequence ID" value="BAB10260.1"/>
    <property type="status" value="ALT_SEQ"/>
    <property type="molecule type" value="Genomic_DNA"/>
</dbReference>
<dbReference type="EMBL" id="CP002688">
    <property type="protein sequence ID" value="AED97054.1"/>
    <property type="molecule type" value="Genomic_DNA"/>
</dbReference>
<dbReference type="EMBL" id="BT003846">
    <property type="protein sequence ID" value="AAO41896.1"/>
    <property type="molecule type" value="mRNA"/>
</dbReference>
<dbReference type="RefSeq" id="NP_200653.2">
    <property type="nucleotide sequence ID" value="NM_125231.4"/>
</dbReference>
<dbReference type="SMR" id="F4KEY9"/>
<dbReference type="FunCoup" id="F4KEY9">
    <property type="interactions" value="4725"/>
</dbReference>
<dbReference type="STRING" id="3702.F4KEY9"/>
<dbReference type="PaxDb" id="3702-AT5G58450.1"/>
<dbReference type="ProteomicsDB" id="251012"/>
<dbReference type="EnsemblPlants" id="AT5G58450.1">
    <property type="protein sequence ID" value="AT5G58450.1"/>
    <property type="gene ID" value="AT5G58450"/>
</dbReference>
<dbReference type="GeneID" id="835958"/>
<dbReference type="Gramene" id="AT5G58450.1">
    <property type="protein sequence ID" value="AT5G58450.1"/>
    <property type="gene ID" value="AT5G58450"/>
</dbReference>
<dbReference type="KEGG" id="ath:AT5G58450"/>
<dbReference type="Araport" id="AT5G58450"/>
<dbReference type="TAIR" id="AT5G58450">
    <property type="gene designation" value="TCU2"/>
</dbReference>
<dbReference type="eggNOG" id="KOG2053">
    <property type="taxonomic scope" value="Eukaryota"/>
</dbReference>
<dbReference type="HOGENOM" id="CLU_012690_0_0_1"/>
<dbReference type="InParanoid" id="F4KEY9"/>
<dbReference type="PRO" id="PR:F4KEY9"/>
<dbReference type="Proteomes" id="UP000006548">
    <property type="component" value="Chromosome 5"/>
</dbReference>
<dbReference type="ExpressionAtlas" id="F4KEY9">
    <property type="expression patterns" value="baseline and differential"/>
</dbReference>
<dbReference type="GO" id="GO:0005737">
    <property type="term" value="C:cytoplasm"/>
    <property type="evidence" value="ECO:0007669"/>
    <property type="project" value="UniProtKB-SubCell"/>
</dbReference>
<dbReference type="GO" id="GO:0009506">
    <property type="term" value="C:plasmodesma"/>
    <property type="evidence" value="ECO:0007005"/>
    <property type="project" value="TAIR"/>
</dbReference>
<dbReference type="FunFam" id="1.25.40.1040:FF:000007">
    <property type="entry name" value="N-alpha-acetyltransferase 25, NatB auxiliary subunit"/>
    <property type="match status" value="1"/>
</dbReference>
<dbReference type="Gene3D" id="1.25.40.1040">
    <property type="match status" value="1"/>
</dbReference>
<dbReference type="InterPro" id="IPR019183">
    <property type="entry name" value="NAA25_NatB_aux_su"/>
</dbReference>
<dbReference type="InterPro" id="IPR011990">
    <property type="entry name" value="TPR-like_helical_dom_sf"/>
</dbReference>
<dbReference type="InterPro" id="IPR019734">
    <property type="entry name" value="TPR_rpt"/>
</dbReference>
<dbReference type="PANTHER" id="PTHR22767:SF3">
    <property type="entry name" value="N-ALPHA-ACETYLTRANSFERASE 25, NATB AUXILIARY SUBUNIT"/>
    <property type="match status" value="1"/>
</dbReference>
<dbReference type="PANTHER" id="PTHR22767">
    <property type="entry name" value="N-TERMINAL ACETYLTRANSFERASE-RELATED"/>
    <property type="match status" value="1"/>
</dbReference>
<dbReference type="Pfam" id="PF09797">
    <property type="entry name" value="NatB_MDM20"/>
    <property type="match status" value="1"/>
</dbReference>
<dbReference type="Pfam" id="PF13432">
    <property type="entry name" value="TPR_16"/>
    <property type="match status" value="1"/>
</dbReference>
<dbReference type="SMART" id="SM00028">
    <property type="entry name" value="TPR"/>
    <property type="match status" value="2"/>
</dbReference>
<dbReference type="SUPFAM" id="SSF48452">
    <property type="entry name" value="TPR-like"/>
    <property type="match status" value="2"/>
</dbReference>
<dbReference type="PROSITE" id="PS00237">
    <property type="entry name" value="G_PROTEIN_RECEP_F1_1"/>
    <property type="match status" value="1"/>
</dbReference>
<dbReference type="PROSITE" id="PS50005">
    <property type="entry name" value="TPR"/>
    <property type="match status" value="1"/>
</dbReference>
<dbReference type="PROSITE" id="PS50293">
    <property type="entry name" value="TPR_REGION"/>
    <property type="match status" value="1"/>
</dbReference>
<keyword id="KW-0963">Cytoplasm</keyword>
<keyword id="KW-1185">Reference proteome</keyword>
<keyword id="KW-0802">TPR repeat</keyword>
<organism evidence="8">
    <name type="scientific">Arabidopsis thaliana</name>
    <name type="common">Mouse-ear cress</name>
    <dbReference type="NCBI Taxonomy" id="3702"/>
    <lineage>
        <taxon>Eukaryota</taxon>
        <taxon>Viridiplantae</taxon>
        <taxon>Streptophyta</taxon>
        <taxon>Embryophyta</taxon>
        <taxon>Tracheophyta</taxon>
        <taxon>Spermatophyta</taxon>
        <taxon>Magnoliopsida</taxon>
        <taxon>eudicotyledons</taxon>
        <taxon>Gunneridae</taxon>
        <taxon>Pentapetalae</taxon>
        <taxon>rosids</taxon>
        <taxon>malvids</taxon>
        <taxon>Brassicales</taxon>
        <taxon>Brassicaceae</taxon>
        <taxon>Camelineae</taxon>
        <taxon>Arabidopsis</taxon>
    </lineage>
</organism>
<accession>F4KEY9</accession>
<accession>Q84WG5</accession>
<accession>Q9FGH7</accession>
<comment type="function">
    <text evidence="2">Auxiliary subunit of the NatB N-alpha-acetyltransferase complex. Required for flowering time regulation and for vegetative and reproductive plant development.</text>
</comment>
<comment type="subcellular location">
    <subcellularLocation>
        <location evidence="2">Cytoplasm</location>
    </subcellularLocation>
</comment>
<comment type="tissue specificity">
    <text evidence="2">Ubiquitously expressed, with a higher expression in vascular bundles, hydathodes, leaf primordia and the base of the trichomes.</text>
</comment>
<comment type="disruption phenotype">
    <text evidence="2 3">Leaf reticulation, mild leaf folding, early flowering and aborted or unfertilized ovules in siliques (PubMed:24244708). No stunted growth or enhanced resistance to pathogens (PubMed:25966763).</text>
</comment>
<comment type="similarity">
    <text evidence="6">Belongs to the MDM20/NAA25 family.</text>
</comment>
<comment type="sequence caution" evidence="6">
    <conflict type="erroneous gene model prediction">
        <sequence resource="EMBL-CDS" id="BAB10260"/>
    </conflict>
</comment>
<name>NAA25_ARATH</name>
<sequence length="1065" mass="121463">MRRWGLWEQETNVHTVAESDNFQSFPDRVEILCLTGTESFDVKGQQLIKTLQKGFPTKFLSSQMSSKFGLAGGIPERRVRPIWDAIDSRQFKNALKLVTSLLAKYPKSPYALALKALIHERMGKTDEALSVCLDAKELLYKDDLALMDDLTLSTLQIVLQRLDHLDLATSCYAHACGKYPNNLELMMGLFNCYVREYSFVKQQQTAIKMYKLAGEERFLLWAVCSIQLQVLCDKSGEKLLLLAEGLLKKHIASHSMHEPEALMVYISLLEQQSKYNDALEVLSGDLGSLLMIEVDKLRIQGRLLARANDYSAAVDVYKKILELSPDDWECFLHYLGCLLEDDSIWKYFDNIDQIHPTKHIECKFSHLTEEMFDSRISSASDLVQKLQRDAENSNLRGPYLAELEIEKRKFLFGKKNEDKLLESLLQYFLKFGHLACYASDVEAYLQVLSPNKKAGFVEMLVKNSDSSASATKVLGQTTTILKVQELTGNIFGLPTDEIEASAVKLAKLYCQNLSLSKDLDPQESMFGEELLSLISNMLVQLFWRTRDFGYLAEAIMVLELGLTIRGHVWQYKILLLHIYSYVGALPLAFERYKALDVKNILTETVSHHILRQMLESPMWVDLSNLLKDYLKFMDDHLRESADLTFLAYRHRNYSKVIEFVLFKQRLQHSNQYQAARVEASVLQLKQNADSFEEEERILENLKSGVQLVELSNEIGSRTLKFNEDMQTRPWWTPCPEKNYLLGPFEEISYCPPKENVKEEREENMKRAIQRKSLLPRMIYLSIQCTPTALKESVETNGSGGDIDVCEELKCLLEDYTKMLGCSLSDAVEMITEISQGARTSESLGSNLVDWLNFAVFWNAWSLSSQEHWHVLNSLFERLILDRVRSMGSSDMSSCYSDVQVLVQIITEPLAWHSLIIQACTRSSLPSGKKKKKNQHSDQLSSSPISQAIKDSIQLLCSTIQDVSNWLLNQLNNPEDGQVEGFLTTLKRDGNAAGPGQILGVLESFIASSEESEVGNRIFQALKSWNTADTARKTVMAQQRVLREFLQICESKRKLLETLKQQMSHV</sequence>
<gene>
    <name evidence="5" type="primary">NAA25</name>
    <name evidence="4" type="synonym">TCU2</name>
    <name evidence="7" type="ordered locus">At5g58450</name>
</gene>
<feature type="chain" id="PRO_0000439080" description="N-terminal acetyltransferase B complex auxiliary subunit NAA25">
    <location>
        <begin position="1"/>
        <end position="1065"/>
    </location>
</feature>
<feature type="repeat" description="TPR" evidence="1">
    <location>
        <begin position="294"/>
        <end position="327"/>
    </location>
</feature>
<protein>
    <recommendedName>
        <fullName evidence="5">N-terminal acetyltransferase B complex auxiliary subunit NAA25</fullName>
    </recommendedName>
    <alternativeName>
        <fullName evidence="4">N-terminal acetyltransferase B complex auxiliary subunit TCU2</fullName>
    </alternativeName>
    <alternativeName>
        <fullName evidence="4">NatB N-alpha-terminal acetylation complex non-catalytic subunit</fullName>
    </alternativeName>
    <alternativeName>
        <fullName evidence="4">Protein TRANSCURVATA 2</fullName>
    </alternativeName>
</protein>
<reference key="1">
    <citation type="submission" date="1999-04" db="EMBL/GenBank/DDBJ databases">
        <title>Structural analysis of Arabidopsis thaliana chromosome 5. XI.</title>
        <authorList>
            <person name="Kaneko T."/>
            <person name="Katoh T."/>
            <person name="Asamizu E."/>
            <person name="Sato S."/>
            <person name="Nakamura Y."/>
            <person name="Kotani H."/>
            <person name="Tabata S."/>
        </authorList>
    </citation>
    <scope>NUCLEOTIDE SEQUENCE [LARGE SCALE GENOMIC DNA]</scope>
    <source>
        <strain>cv. Columbia</strain>
    </source>
</reference>
<reference key="2">
    <citation type="journal article" date="2017" name="Plant J.">
        <title>Araport11: a complete reannotation of the Arabidopsis thaliana reference genome.</title>
        <authorList>
            <person name="Cheng C.Y."/>
            <person name="Krishnakumar V."/>
            <person name="Chan A.P."/>
            <person name="Thibaud-Nissen F."/>
            <person name="Schobel S."/>
            <person name="Town C.D."/>
        </authorList>
    </citation>
    <scope>GENOME REANNOTATION</scope>
    <source>
        <strain>cv. Columbia</strain>
    </source>
</reference>
<reference key="3">
    <citation type="journal article" date="2003" name="Science">
        <title>Empirical analysis of transcriptional activity in the Arabidopsis genome.</title>
        <authorList>
            <person name="Yamada K."/>
            <person name="Lim J."/>
            <person name="Dale J.M."/>
            <person name="Chen H."/>
            <person name="Shinn P."/>
            <person name="Palm C.J."/>
            <person name="Southwick A.M."/>
            <person name="Wu H.C."/>
            <person name="Kim C.J."/>
            <person name="Nguyen M."/>
            <person name="Pham P.K."/>
            <person name="Cheuk R.F."/>
            <person name="Karlin-Newmann G."/>
            <person name="Liu S.X."/>
            <person name="Lam B."/>
            <person name="Sakano H."/>
            <person name="Wu T."/>
            <person name="Yu G."/>
            <person name="Miranda M."/>
            <person name="Quach H.L."/>
            <person name="Tripp M."/>
            <person name="Chang C.H."/>
            <person name="Lee J.M."/>
            <person name="Toriumi M.J."/>
            <person name="Chan M.M."/>
            <person name="Tang C.C."/>
            <person name="Onodera C.S."/>
            <person name="Deng J.M."/>
            <person name="Akiyama K."/>
            <person name="Ansari Y."/>
            <person name="Arakawa T."/>
            <person name="Banh J."/>
            <person name="Banno F."/>
            <person name="Bowser L."/>
            <person name="Brooks S.Y."/>
            <person name="Carninci P."/>
            <person name="Chao Q."/>
            <person name="Choy N."/>
            <person name="Enju A."/>
            <person name="Goldsmith A.D."/>
            <person name="Gurjal M."/>
            <person name="Hansen N.F."/>
            <person name="Hayashizaki Y."/>
            <person name="Johnson-Hopson C."/>
            <person name="Hsuan V.W."/>
            <person name="Iida K."/>
            <person name="Karnes M."/>
            <person name="Khan S."/>
            <person name="Koesema E."/>
            <person name="Ishida J."/>
            <person name="Jiang P.X."/>
            <person name="Jones T."/>
            <person name="Kawai J."/>
            <person name="Kamiya A."/>
            <person name="Meyers C."/>
            <person name="Nakajima M."/>
            <person name="Narusaka M."/>
            <person name="Seki M."/>
            <person name="Sakurai T."/>
            <person name="Satou M."/>
            <person name="Tamse R."/>
            <person name="Vaysberg M."/>
            <person name="Wallender E.K."/>
            <person name="Wong C."/>
            <person name="Yamamura Y."/>
            <person name="Yuan S."/>
            <person name="Shinozaki K."/>
            <person name="Davis R.W."/>
            <person name="Theologis A."/>
            <person name="Ecker J.R."/>
        </authorList>
    </citation>
    <scope>NUCLEOTIDE SEQUENCE [LARGE SCALE MRNA] OF 23-1065</scope>
    <source>
        <strain>cv. Columbia</strain>
    </source>
</reference>
<reference key="4">
    <citation type="journal article" date="2013" name="PLoS ONE">
        <title>Mutation of an Arabidopsis NatB N-alpha-terminal acetylation complex component causes pleiotropic developmental defects.</title>
        <authorList>
            <person name="Ferrandez-Ayela A."/>
            <person name="Micol-Ponce R."/>
            <person name="Sanchez-Garcia A.B."/>
            <person name="Alonso-Peral M.M."/>
            <person name="Micol J.L."/>
            <person name="Ponce M.R."/>
        </authorList>
    </citation>
    <scope>FUNCTION</scope>
    <scope>TISSUE SPECIFICITY</scope>
    <scope>SUBCELLULAR LOCATION</scope>
    <scope>DISRUPTION PHENOTYPE</scope>
</reference>
<reference key="5">
    <citation type="journal article" date="2015" name="Plant Cell">
        <title>Two N-terminal acetyltransferases antagonistically regulate the stability of a nod-like receptor in Arabidopsis.</title>
        <authorList>
            <person name="Xu F."/>
            <person name="Huang Y."/>
            <person name="Li L."/>
            <person name="Gannon P."/>
            <person name="Linster E."/>
            <person name="Huber M."/>
            <person name="Kapos P."/>
            <person name="Bienvenut W."/>
            <person name="Polevoda B."/>
            <person name="Meinnel T."/>
            <person name="Hell R."/>
            <person name="Giglione C."/>
            <person name="Zhang Y."/>
            <person name="Wirtz M."/>
            <person name="Chen S."/>
            <person name="Li X."/>
        </authorList>
    </citation>
    <scope>DISRUPTION PHENOTYPE</scope>
</reference>
<proteinExistence type="evidence at transcript level"/>
<evidence type="ECO:0000255" key="1">
    <source>
        <dbReference type="PROSITE-ProRule" id="PRU00339"/>
    </source>
</evidence>
<evidence type="ECO:0000269" key="2">
    <source>
    </source>
</evidence>
<evidence type="ECO:0000269" key="3">
    <source>
    </source>
</evidence>
<evidence type="ECO:0000303" key="4">
    <source>
    </source>
</evidence>
<evidence type="ECO:0000303" key="5">
    <source>
    </source>
</evidence>
<evidence type="ECO:0000305" key="6"/>
<evidence type="ECO:0000312" key="7">
    <source>
        <dbReference type="Araport" id="AT5G58450"/>
    </source>
</evidence>
<evidence type="ECO:0000312" key="8">
    <source>
        <dbReference type="Proteomes" id="UP000006548"/>
    </source>
</evidence>